<name>RNH2_DESHD</name>
<sequence length="260" mass="28900">MKGISRMSIREVSEVLNTEPSEEFLKACAQDERLGIQNLIVRYYKEWEARLVEAERIEALLREEKQLWLNGYLHIAGIDEAGRGPLAGPVVAATCILPAKFNLPGLNDSKKLTESKREKLFQQIKEQAIGYAVGSAEPAEIDGLNILQATKLAMKRAVEGLKVRPHFLLIDALELPSLKIPQKGIIDGDALSASIAAASILAKVSRDHLMGELDKLYPEYGFAKNKGYGTREHLMALRRHGVSPIHRRSFAPVQQQLDIV</sequence>
<evidence type="ECO:0000255" key="1">
    <source>
        <dbReference type="HAMAP-Rule" id="MF_00052"/>
    </source>
</evidence>
<evidence type="ECO:0000255" key="2">
    <source>
        <dbReference type="PROSITE-ProRule" id="PRU01319"/>
    </source>
</evidence>
<feature type="chain" id="PRO_1000194448" description="Ribonuclease HII">
    <location>
        <begin position="1"/>
        <end position="260"/>
    </location>
</feature>
<feature type="domain" description="RNase H type-2" evidence="2">
    <location>
        <begin position="73"/>
        <end position="260"/>
    </location>
</feature>
<feature type="binding site" evidence="1">
    <location>
        <position position="79"/>
    </location>
    <ligand>
        <name>a divalent metal cation</name>
        <dbReference type="ChEBI" id="CHEBI:60240"/>
    </ligand>
</feature>
<feature type="binding site" evidence="1">
    <location>
        <position position="80"/>
    </location>
    <ligand>
        <name>a divalent metal cation</name>
        <dbReference type="ChEBI" id="CHEBI:60240"/>
    </ligand>
</feature>
<feature type="binding site" evidence="1">
    <location>
        <position position="171"/>
    </location>
    <ligand>
        <name>a divalent metal cation</name>
        <dbReference type="ChEBI" id="CHEBI:60240"/>
    </ligand>
</feature>
<organism>
    <name type="scientific">Desulfitobacterium hafniense (strain DSM 10664 / DCB-2)</name>
    <dbReference type="NCBI Taxonomy" id="272564"/>
    <lineage>
        <taxon>Bacteria</taxon>
        <taxon>Bacillati</taxon>
        <taxon>Bacillota</taxon>
        <taxon>Clostridia</taxon>
        <taxon>Eubacteriales</taxon>
        <taxon>Desulfitobacteriaceae</taxon>
        <taxon>Desulfitobacterium</taxon>
    </lineage>
</organism>
<dbReference type="EC" id="3.1.26.4" evidence="1"/>
<dbReference type="EMBL" id="CP001336">
    <property type="protein sequence ID" value="ACL21768.1"/>
    <property type="molecule type" value="Genomic_DNA"/>
</dbReference>
<dbReference type="SMR" id="B8FRK8"/>
<dbReference type="KEGG" id="dhd:Dhaf_3752"/>
<dbReference type="HOGENOM" id="CLU_036532_2_1_9"/>
<dbReference type="Proteomes" id="UP000007726">
    <property type="component" value="Chromosome"/>
</dbReference>
<dbReference type="GO" id="GO:0005737">
    <property type="term" value="C:cytoplasm"/>
    <property type="evidence" value="ECO:0007669"/>
    <property type="project" value="UniProtKB-SubCell"/>
</dbReference>
<dbReference type="GO" id="GO:0032299">
    <property type="term" value="C:ribonuclease H2 complex"/>
    <property type="evidence" value="ECO:0007669"/>
    <property type="project" value="TreeGrafter"/>
</dbReference>
<dbReference type="GO" id="GO:0030145">
    <property type="term" value="F:manganese ion binding"/>
    <property type="evidence" value="ECO:0007669"/>
    <property type="project" value="UniProtKB-UniRule"/>
</dbReference>
<dbReference type="GO" id="GO:0003723">
    <property type="term" value="F:RNA binding"/>
    <property type="evidence" value="ECO:0007669"/>
    <property type="project" value="InterPro"/>
</dbReference>
<dbReference type="GO" id="GO:0004523">
    <property type="term" value="F:RNA-DNA hybrid ribonuclease activity"/>
    <property type="evidence" value="ECO:0007669"/>
    <property type="project" value="UniProtKB-UniRule"/>
</dbReference>
<dbReference type="GO" id="GO:0043137">
    <property type="term" value="P:DNA replication, removal of RNA primer"/>
    <property type="evidence" value="ECO:0007669"/>
    <property type="project" value="TreeGrafter"/>
</dbReference>
<dbReference type="GO" id="GO:0006298">
    <property type="term" value="P:mismatch repair"/>
    <property type="evidence" value="ECO:0007669"/>
    <property type="project" value="TreeGrafter"/>
</dbReference>
<dbReference type="CDD" id="cd07182">
    <property type="entry name" value="RNase_HII_bacteria_HII_like"/>
    <property type="match status" value="1"/>
</dbReference>
<dbReference type="FunFam" id="3.30.420.10:FF:000006">
    <property type="entry name" value="Ribonuclease HII"/>
    <property type="match status" value="1"/>
</dbReference>
<dbReference type="Gene3D" id="3.30.420.10">
    <property type="entry name" value="Ribonuclease H-like superfamily/Ribonuclease H"/>
    <property type="match status" value="1"/>
</dbReference>
<dbReference type="HAMAP" id="MF_00052_B">
    <property type="entry name" value="RNase_HII_B"/>
    <property type="match status" value="1"/>
</dbReference>
<dbReference type="InterPro" id="IPR022898">
    <property type="entry name" value="RNase_HII"/>
</dbReference>
<dbReference type="InterPro" id="IPR001352">
    <property type="entry name" value="RNase_HII/HIII"/>
</dbReference>
<dbReference type="InterPro" id="IPR024567">
    <property type="entry name" value="RNase_HII/HIII_dom"/>
</dbReference>
<dbReference type="InterPro" id="IPR012337">
    <property type="entry name" value="RNaseH-like_sf"/>
</dbReference>
<dbReference type="InterPro" id="IPR036397">
    <property type="entry name" value="RNaseH_sf"/>
</dbReference>
<dbReference type="NCBIfam" id="NF000594">
    <property type="entry name" value="PRK00015.1-1"/>
    <property type="match status" value="1"/>
</dbReference>
<dbReference type="NCBIfam" id="NF000595">
    <property type="entry name" value="PRK00015.1-3"/>
    <property type="match status" value="1"/>
</dbReference>
<dbReference type="NCBIfam" id="NF000596">
    <property type="entry name" value="PRK00015.1-4"/>
    <property type="match status" value="1"/>
</dbReference>
<dbReference type="PANTHER" id="PTHR10954">
    <property type="entry name" value="RIBONUCLEASE H2 SUBUNIT A"/>
    <property type="match status" value="1"/>
</dbReference>
<dbReference type="PANTHER" id="PTHR10954:SF18">
    <property type="entry name" value="RIBONUCLEASE HII"/>
    <property type="match status" value="1"/>
</dbReference>
<dbReference type="Pfam" id="PF01351">
    <property type="entry name" value="RNase_HII"/>
    <property type="match status" value="1"/>
</dbReference>
<dbReference type="SUPFAM" id="SSF53098">
    <property type="entry name" value="Ribonuclease H-like"/>
    <property type="match status" value="1"/>
</dbReference>
<dbReference type="PROSITE" id="PS51975">
    <property type="entry name" value="RNASE_H_2"/>
    <property type="match status" value="1"/>
</dbReference>
<accession>B8FRK8</accession>
<protein>
    <recommendedName>
        <fullName evidence="1">Ribonuclease HII</fullName>
        <shortName evidence="1">RNase HII</shortName>
        <ecNumber evidence="1">3.1.26.4</ecNumber>
    </recommendedName>
</protein>
<gene>
    <name evidence="1" type="primary">rnhB</name>
    <name type="ordered locus">Dhaf_3752</name>
</gene>
<proteinExistence type="inferred from homology"/>
<keyword id="KW-0963">Cytoplasm</keyword>
<keyword id="KW-0255">Endonuclease</keyword>
<keyword id="KW-0378">Hydrolase</keyword>
<keyword id="KW-0464">Manganese</keyword>
<keyword id="KW-0479">Metal-binding</keyword>
<keyword id="KW-0540">Nuclease</keyword>
<reference key="1">
    <citation type="journal article" date="2012" name="BMC Microbiol.">
        <title>Genome sequence of Desulfitobacterium hafniense DCB-2, a Gram-positive anaerobe capable of dehalogenation and metal reduction.</title>
        <authorList>
            <person name="Kim S.H."/>
            <person name="Harzman C."/>
            <person name="Davis J.K."/>
            <person name="Hutcheson R."/>
            <person name="Broderick J.B."/>
            <person name="Marsh T.L."/>
            <person name="Tiedje J.M."/>
        </authorList>
    </citation>
    <scope>NUCLEOTIDE SEQUENCE [LARGE SCALE GENOMIC DNA]</scope>
    <source>
        <strain>DSM 10664 / DCB-2</strain>
    </source>
</reference>
<comment type="function">
    <text evidence="1">Endonuclease that specifically degrades the RNA of RNA-DNA hybrids.</text>
</comment>
<comment type="catalytic activity">
    <reaction evidence="1">
        <text>Endonucleolytic cleavage to 5'-phosphomonoester.</text>
        <dbReference type="EC" id="3.1.26.4"/>
    </reaction>
</comment>
<comment type="cofactor">
    <cofactor evidence="1">
        <name>Mn(2+)</name>
        <dbReference type="ChEBI" id="CHEBI:29035"/>
    </cofactor>
    <cofactor evidence="1">
        <name>Mg(2+)</name>
        <dbReference type="ChEBI" id="CHEBI:18420"/>
    </cofactor>
    <text evidence="1">Manganese or magnesium. Binds 1 divalent metal ion per monomer in the absence of substrate. May bind a second metal ion after substrate binding.</text>
</comment>
<comment type="subcellular location">
    <subcellularLocation>
        <location evidence="1">Cytoplasm</location>
    </subcellularLocation>
</comment>
<comment type="similarity">
    <text evidence="1">Belongs to the RNase HII family.</text>
</comment>